<protein>
    <recommendedName>
        <fullName evidence="1">Acetaldehyde dehydrogenase 3</fullName>
        <ecNumber evidence="1">1.2.1.10</ecNumber>
    </recommendedName>
    <alternativeName>
        <fullName evidence="1">Acetaldehyde dehydrogenase [acetylating] 3</fullName>
    </alternativeName>
</protein>
<name>ACDH3_PARXL</name>
<reference key="1">
    <citation type="journal article" date="2006" name="Proc. Natl. Acad. Sci. U.S.A.">
        <title>Burkholderia xenovorans LB400 harbors a multi-replicon, 9.73-Mbp genome shaped for versatility.</title>
        <authorList>
            <person name="Chain P.S.G."/>
            <person name="Denef V.J."/>
            <person name="Konstantinidis K.T."/>
            <person name="Vergez L.M."/>
            <person name="Agullo L."/>
            <person name="Reyes V.L."/>
            <person name="Hauser L."/>
            <person name="Cordova M."/>
            <person name="Gomez L."/>
            <person name="Gonzalez M."/>
            <person name="Land M."/>
            <person name="Lao V."/>
            <person name="Larimer F."/>
            <person name="LiPuma J.J."/>
            <person name="Mahenthiralingam E."/>
            <person name="Malfatti S.A."/>
            <person name="Marx C.J."/>
            <person name="Parnell J.J."/>
            <person name="Ramette A."/>
            <person name="Richardson P."/>
            <person name="Seeger M."/>
            <person name="Smith D."/>
            <person name="Spilker T."/>
            <person name="Sul W.J."/>
            <person name="Tsoi T.V."/>
            <person name="Ulrich L.E."/>
            <person name="Zhulin I.B."/>
            <person name="Tiedje J.M."/>
        </authorList>
    </citation>
    <scope>NUCLEOTIDE SEQUENCE [LARGE SCALE GENOMIC DNA]</scope>
    <source>
        <strain>LB400</strain>
    </source>
</reference>
<dbReference type="EC" id="1.2.1.10" evidence="1"/>
<dbReference type="EMBL" id="CP000271">
    <property type="protein sequence ID" value="ABE33662.1"/>
    <property type="molecule type" value="Genomic_DNA"/>
</dbReference>
<dbReference type="RefSeq" id="WP_011491022.1">
    <property type="nucleotide sequence ID" value="NC_007952.1"/>
</dbReference>
<dbReference type="SMR" id="Q13QH7"/>
<dbReference type="STRING" id="266265.Bxe_B2326"/>
<dbReference type="KEGG" id="bxb:DR64_4658"/>
<dbReference type="KEGG" id="bxe:Bxe_B2326"/>
<dbReference type="PATRIC" id="fig|266265.5.peg.5386"/>
<dbReference type="eggNOG" id="COG4569">
    <property type="taxonomic scope" value="Bacteria"/>
</dbReference>
<dbReference type="OrthoDB" id="9786743at2"/>
<dbReference type="Proteomes" id="UP000001817">
    <property type="component" value="Chromosome 2"/>
</dbReference>
<dbReference type="GO" id="GO:0008774">
    <property type="term" value="F:acetaldehyde dehydrogenase (acetylating) activity"/>
    <property type="evidence" value="ECO:0007669"/>
    <property type="project" value="UniProtKB-UniRule"/>
</dbReference>
<dbReference type="GO" id="GO:0051287">
    <property type="term" value="F:NAD binding"/>
    <property type="evidence" value="ECO:0007669"/>
    <property type="project" value="UniProtKB-UniRule"/>
</dbReference>
<dbReference type="GO" id="GO:0009056">
    <property type="term" value="P:catabolic process"/>
    <property type="evidence" value="ECO:0007669"/>
    <property type="project" value="UniProtKB-KW"/>
</dbReference>
<dbReference type="CDD" id="cd23933">
    <property type="entry name" value="ALDH_C"/>
    <property type="match status" value="1"/>
</dbReference>
<dbReference type="Gene3D" id="3.30.360.10">
    <property type="entry name" value="Dihydrodipicolinate Reductase, domain 2"/>
    <property type="match status" value="1"/>
</dbReference>
<dbReference type="Gene3D" id="3.40.50.720">
    <property type="entry name" value="NAD(P)-binding Rossmann-like Domain"/>
    <property type="match status" value="1"/>
</dbReference>
<dbReference type="HAMAP" id="MF_01657">
    <property type="entry name" value="Ac_ald_DH_ac"/>
    <property type="match status" value="1"/>
</dbReference>
<dbReference type="InterPro" id="IPR003361">
    <property type="entry name" value="Acetaldehyde_dehydrogenase"/>
</dbReference>
<dbReference type="InterPro" id="IPR015426">
    <property type="entry name" value="Acetylaldehyde_DH_C"/>
</dbReference>
<dbReference type="InterPro" id="IPR036291">
    <property type="entry name" value="NAD(P)-bd_dom_sf"/>
</dbReference>
<dbReference type="InterPro" id="IPR000534">
    <property type="entry name" value="Semialdehyde_DH_NAD-bd"/>
</dbReference>
<dbReference type="NCBIfam" id="TIGR03215">
    <property type="entry name" value="ac_ald_DH_ac"/>
    <property type="match status" value="1"/>
</dbReference>
<dbReference type="NCBIfam" id="NF006157">
    <property type="entry name" value="PRK08300.1"/>
    <property type="match status" value="1"/>
</dbReference>
<dbReference type="Pfam" id="PF09290">
    <property type="entry name" value="AcetDehyd-dimer"/>
    <property type="match status" value="1"/>
</dbReference>
<dbReference type="Pfam" id="PF01118">
    <property type="entry name" value="Semialdhyde_dh"/>
    <property type="match status" value="1"/>
</dbReference>
<dbReference type="PIRSF" id="PIRSF015689">
    <property type="entry name" value="Actaldh_dh_actl"/>
    <property type="match status" value="1"/>
</dbReference>
<dbReference type="SMART" id="SM00859">
    <property type="entry name" value="Semialdhyde_dh"/>
    <property type="match status" value="1"/>
</dbReference>
<dbReference type="SUPFAM" id="SSF55347">
    <property type="entry name" value="Glyceraldehyde-3-phosphate dehydrogenase-like, C-terminal domain"/>
    <property type="match status" value="1"/>
</dbReference>
<dbReference type="SUPFAM" id="SSF51735">
    <property type="entry name" value="NAD(P)-binding Rossmann-fold domains"/>
    <property type="match status" value="1"/>
</dbReference>
<keyword id="KW-0058">Aromatic hydrocarbons catabolism</keyword>
<keyword id="KW-0520">NAD</keyword>
<keyword id="KW-0560">Oxidoreductase</keyword>
<keyword id="KW-1185">Reference proteome</keyword>
<sequence length="313" mass="32763">MASEKLKAAIIGSGNIGTDLMIKIMRHSEHLEMAAMVGIDAASDGLARAARLGVATTHEGVEGLTRLPVFDDIDFVFDATSAGAHVKNDAFLRALKPGIRLIDLTPAAIGPYCVPVVNLDAHLDSRNVNMVTCGGQATIPMVAAVSRVAKVHYAEIVASISSKSAGPGTRANIDEFTETTSKAIEAVGGAAKGKAIIVLNPAEPPVMMRDTVYVLSDLADRAQVEASIEAMAAAVHAYVPGYRLKQKVQFDEIAADVPLNIPGLGRFSGLKTSVFIEVEGAAHYLPAYAGNLDIMTSAALATAERMAQSLVQA</sequence>
<gene>
    <name type="ordered locus">Bxeno_B0694</name>
    <name type="ORF">Bxe_B2326</name>
</gene>
<evidence type="ECO:0000255" key="1">
    <source>
        <dbReference type="HAMAP-Rule" id="MF_01657"/>
    </source>
</evidence>
<comment type="catalytic activity">
    <reaction evidence="1">
        <text>acetaldehyde + NAD(+) + CoA = acetyl-CoA + NADH + H(+)</text>
        <dbReference type="Rhea" id="RHEA:23288"/>
        <dbReference type="ChEBI" id="CHEBI:15343"/>
        <dbReference type="ChEBI" id="CHEBI:15378"/>
        <dbReference type="ChEBI" id="CHEBI:57287"/>
        <dbReference type="ChEBI" id="CHEBI:57288"/>
        <dbReference type="ChEBI" id="CHEBI:57540"/>
        <dbReference type="ChEBI" id="CHEBI:57945"/>
        <dbReference type="EC" id="1.2.1.10"/>
    </reaction>
</comment>
<comment type="similarity">
    <text evidence="1">Belongs to the acetaldehyde dehydrogenase family.</text>
</comment>
<accession>Q13QH7</accession>
<feature type="chain" id="PRO_0000337977" description="Acetaldehyde dehydrogenase 3">
    <location>
        <begin position="1"/>
        <end position="313"/>
    </location>
</feature>
<feature type="active site" description="Acyl-thioester intermediate" evidence="1">
    <location>
        <position position="133"/>
    </location>
</feature>
<feature type="binding site" evidence="1">
    <location>
        <begin position="13"/>
        <end position="16"/>
    </location>
    <ligand>
        <name>NAD(+)</name>
        <dbReference type="ChEBI" id="CHEBI:57540"/>
    </ligand>
</feature>
<feature type="binding site" evidence="1">
    <location>
        <begin position="164"/>
        <end position="172"/>
    </location>
    <ligand>
        <name>NAD(+)</name>
        <dbReference type="ChEBI" id="CHEBI:57540"/>
    </ligand>
</feature>
<feature type="binding site" evidence="1">
    <location>
        <position position="291"/>
    </location>
    <ligand>
        <name>NAD(+)</name>
        <dbReference type="ChEBI" id="CHEBI:57540"/>
    </ligand>
</feature>
<organism>
    <name type="scientific">Paraburkholderia xenovorans (strain LB400)</name>
    <dbReference type="NCBI Taxonomy" id="266265"/>
    <lineage>
        <taxon>Bacteria</taxon>
        <taxon>Pseudomonadati</taxon>
        <taxon>Pseudomonadota</taxon>
        <taxon>Betaproteobacteria</taxon>
        <taxon>Burkholderiales</taxon>
        <taxon>Burkholderiaceae</taxon>
        <taxon>Paraburkholderia</taxon>
    </lineage>
</organism>
<proteinExistence type="inferred from homology"/>